<proteinExistence type="evidence at transcript level"/>
<sequence length="449" mass="50259">MKFTQRLSLRVRLTLIFLILASVTWLLSSFVAWKQTTDNVDELFDTQLMLFAKRLSTLDLNEINAADRMAQTPNKLKHGHVDDDALTFAIFTHDGRMVLNDGDNGEDIPYSYQREGFADGQLVGDKDQWRFVWMTSPDGKYRIVVGQEWEYREDMALAIVAGQLIPWLVALPVMLIIMMVLLGRELAPLNKLALALRMRDPDSEKPLNATGVPSEVRPLVESLNQLFARTHAMMVRERRFTSDAAHELRSPLTALKVQTEVAQLSDDDPQARKKALLQLHSGIDRATRLVDQLLTLSRLDSLDNLQDVAEIPLEDLLQSSVMDIYHTAQQAKIDVRLTLNVQGIKRTGQPLLLSLLVRNLLDNAVRYSPQGSVVDVTLNADNFIVRDNGPGVTPEALARIGERFYRPPGQTATGSGLGLSIVQRIAKLHGMNVEFGNAEQGGFEAKVSW</sequence>
<keyword id="KW-0067">ATP-binding</keyword>
<keyword id="KW-0997">Cell inner membrane</keyword>
<keyword id="KW-1003">Cell membrane</keyword>
<keyword id="KW-0418">Kinase</keyword>
<keyword id="KW-0472">Membrane</keyword>
<keyword id="KW-0547">Nucleotide-binding</keyword>
<keyword id="KW-0597">Phosphoprotein</keyword>
<keyword id="KW-1185">Reference proteome</keyword>
<keyword id="KW-0808">Transferase</keyword>
<keyword id="KW-0812">Transmembrane</keyword>
<keyword id="KW-1133">Transmembrane helix</keyword>
<keyword id="KW-0902">Two-component regulatory system</keyword>
<protein>
    <recommendedName>
        <fullName>Sensor protein QseC</fullName>
        <ecNumber>2.7.13.3</ecNumber>
    </recommendedName>
</protein>
<accession>Q8X524</accession>
<accession>Q8X2K3</accession>
<accession>Q8X2K4</accession>
<name>QSEC_ECO57</name>
<gene>
    <name type="primary">qseC</name>
    <name type="ordered locus">Z4378</name>
    <name type="ordered locus">ECs3908/ECs3909</name>
</gene>
<organism>
    <name type="scientific">Escherichia coli O157:H7</name>
    <dbReference type="NCBI Taxonomy" id="83334"/>
    <lineage>
        <taxon>Bacteria</taxon>
        <taxon>Pseudomonadati</taxon>
        <taxon>Pseudomonadota</taxon>
        <taxon>Gammaproteobacteria</taxon>
        <taxon>Enterobacterales</taxon>
        <taxon>Enterobacteriaceae</taxon>
        <taxon>Escherichia</taxon>
    </lineage>
</organism>
<dbReference type="EC" id="2.7.13.3"/>
<dbReference type="EMBL" id="AE005174">
    <property type="protein sequence ID" value="AAG58160.1"/>
    <property type="molecule type" value="Genomic_DNA"/>
</dbReference>
<dbReference type="EMBL" id="BA000007">
    <property type="protein sequence ID" value="BAB37331.2"/>
    <property type="molecule type" value="Genomic_DNA"/>
</dbReference>
<dbReference type="PIR" id="D85962">
    <property type="entry name" value="D85962"/>
</dbReference>
<dbReference type="PIR" id="D91117">
    <property type="entry name" value="D91117"/>
</dbReference>
<dbReference type="PIR" id="E91117">
    <property type="entry name" value="E91117"/>
</dbReference>
<dbReference type="RefSeq" id="WP_000673362.1">
    <property type="nucleotide sequence ID" value="NZ_VOAI01000009.1"/>
</dbReference>
<dbReference type="SMR" id="Q8X524"/>
<dbReference type="STRING" id="155864.Z4378"/>
<dbReference type="KEGG" id="ece:Z4378"/>
<dbReference type="PATRIC" id="fig|83334.175.peg.2423"/>
<dbReference type="eggNOG" id="COG0642">
    <property type="taxonomic scope" value="Bacteria"/>
</dbReference>
<dbReference type="HOGENOM" id="CLU_147058_0_0_6"/>
<dbReference type="OMA" id="WRTYVTQ"/>
<dbReference type="BRENDA" id="2.7.13.3">
    <property type="organism ID" value="2026"/>
</dbReference>
<dbReference type="PHI-base" id="PHI:12147"/>
<dbReference type="Proteomes" id="UP000000558">
    <property type="component" value="Chromosome"/>
</dbReference>
<dbReference type="Proteomes" id="UP000002519">
    <property type="component" value="Chromosome"/>
</dbReference>
<dbReference type="GO" id="GO:0005886">
    <property type="term" value="C:plasma membrane"/>
    <property type="evidence" value="ECO:0007669"/>
    <property type="project" value="UniProtKB-SubCell"/>
</dbReference>
<dbReference type="GO" id="GO:0005524">
    <property type="term" value="F:ATP binding"/>
    <property type="evidence" value="ECO:0007669"/>
    <property type="project" value="UniProtKB-KW"/>
</dbReference>
<dbReference type="GO" id="GO:0000155">
    <property type="term" value="F:phosphorelay sensor kinase activity"/>
    <property type="evidence" value="ECO:0007669"/>
    <property type="project" value="InterPro"/>
</dbReference>
<dbReference type="CDD" id="cd16940">
    <property type="entry name" value="HATPase_BasS-like"/>
    <property type="match status" value="1"/>
</dbReference>
<dbReference type="CDD" id="cd00082">
    <property type="entry name" value="HisKA"/>
    <property type="match status" value="1"/>
</dbReference>
<dbReference type="FunFam" id="1.20.5.1040:FF:000001">
    <property type="entry name" value="Sensor histidine kinase QseC"/>
    <property type="match status" value="1"/>
</dbReference>
<dbReference type="FunFam" id="1.20.5.1040:FF:000002">
    <property type="entry name" value="Sensor histidine kinase QseC"/>
    <property type="match status" value="1"/>
</dbReference>
<dbReference type="FunFam" id="1.10.287.130:FF:000035">
    <property type="entry name" value="Two-component sensor histidine kinase"/>
    <property type="match status" value="1"/>
</dbReference>
<dbReference type="FunFam" id="3.30.565.10:FF:000055">
    <property type="entry name" value="Two-component sensor histidine kinase"/>
    <property type="match status" value="1"/>
</dbReference>
<dbReference type="Gene3D" id="1.10.287.130">
    <property type="match status" value="1"/>
</dbReference>
<dbReference type="Gene3D" id="3.30.565.10">
    <property type="entry name" value="Histidine kinase-like ATPase, C-terminal domain"/>
    <property type="match status" value="1"/>
</dbReference>
<dbReference type="Gene3D" id="1.20.5.1040">
    <property type="entry name" value="Sensor protein qsec"/>
    <property type="match status" value="2"/>
</dbReference>
<dbReference type="InterPro" id="IPR013727">
    <property type="entry name" value="2CSK_N"/>
</dbReference>
<dbReference type="InterPro" id="IPR036890">
    <property type="entry name" value="HATPase_C_sf"/>
</dbReference>
<dbReference type="InterPro" id="IPR005467">
    <property type="entry name" value="His_kinase_dom"/>
</dbReference>
<dbReference type="InterPro" id="IPR003661">
    <property type="entry name" value="HisK_dim/P_dom"/>
</dbReference>
<dbReference type="InterPro" id="IPR036097">
    <property type="entry name" value="HisK_dim/P_sf"/>
</dbReference>
<dbReference type="InterPro" id="IPR004358">
    <property type="entry name" value="Sig_transdc_His_kin-like_C"/>
</dbReference>
<dbReference type="InterPro" id="IPR050428">
    <property type="entry name" value="TCS_sensor_his_kinase"/>
</dbReference>
<dbReference type="NCBIfam" id="NF007664">
    <property type="entry name" value="PRK10337.1"/>
    <property type="match status" value="1"/>
</dbReference>
<dbReference type="PANTHER" id="PTHR45436">
    <property type="entry name" value="SENSOR HISTIDINE KINASE YKOH"/>
    <property type="match status" value="1"/>
</dbReference>
<dbReference type="PANTHER" id="PTHR45436:SF14">
    <property type="entry name" value="SENSOR PROTEIN QSEC"/>
    <property type="match status" value="1"/>
</dbReference>
<dbReference type="Pfam" id="PF08521">
    <property type="entry name" value="2CSK_N"/>
    <property type="match status" value="1"/>
</dbReference>
<dbReference type="Pfam" id="PF02518">
    <property type="entry name" value="HATPase_c"/>
    <property type="match status" value="1"/>
</dbReference>
<dbReference type="Pfam" id="PF00512">
    <property type="entry name" value="HisKA"/>
    <property type="match status" value="1"/>
</dbReference>
<dbReference type="PRINTS" id="PR00344">
    <property type="entry name" value="BCTRLSENSOR"/>
</dbReference>
<dbReference type="SMART" id="SM00387">
    <property type="entry name" value="HATPase_c"/>
    <property type="match status" value="1"/>
</dbReference>
<dbReference type="SMART" id="SM00388">
    <property type="entry name" value="HisKA"/>
    <property type="match status" value="1"/>
</dbReference>
<dbReference type="SUPFAM" id="SSF55874">
    <property type="entry name" value="ATPase domain of HSP90 chaperone/DNA topoisomerase II/histidine kinase"/>
    <property type="match status" value="1"/>
</dbReference>
<dbReference type="SUPFAM" id="SSF47384">
    <property type="entry name" value="Homodimeric domain of signal transducing histidine kinase"/>
    <property type="match status" value="1"/>
</dbReference>
<dbReference type="PROSITE" id="PS50109">
    <property type="entry name" value="HIS_KIN"/>
    <property type="match status" value="1"/>
</dbReference>
<feature type="chain" id="PRO_0000074704" description="Sensor protein QseC">
    <location>
        <begin position="1"/>
        <end position="449"/>
    </location>
</feature>
<feature type="topological domain" description="Cytoplasmic" evidence="2">
    <location>
        <begin position="1"/>
        <end position="12"/>
    </location>
</feature>
<feature type="transmembrane region" description="Helical" evidence="2">
    <location>
        <begin position="13"/>
        <end position="33"/>
    </location>
</feature>
<feature type="topological domain" description="Periplasmic" evidence="2">
    <location>
        <begin position="34"/>
        <end position="156"/>
    </location>
</feature>
<feature type="transmembrane region" description="Helical" evidence="2">
    <location>
        <begin position="157"/>
        <end position="177"/>
    </location>
</feature>
<feature type="topological domain" description="Cytoplasmic" evidence="2">
    <location>
        <begin position="178"/>
        <end position="449"/>
    </location>
</feature>
<feature type="domain" description="Histidine kinase" evidence="3">
    <location>
        <begin position="243"/>
        <end position="449"/>
    </location>
</feature>
<feature type="modified residue" description="Phosphohistidine; by autocatalysis" evidence="3">
    <location>
        <position position="246"/>
    </location>
</feature>
<comment type="function">
    <text evidence="4">Member of a two-component regulatory system QseB/QseC. Activates the flagella regulon by activating transcription of FlhDC. May activate QseB by phosphorylation.</text>
</comment>
<comment type="catalytic activity">
    <reaction>
        <text>ATP + protein L-histidine = ADP + protein N-phospho-L-histidine.</text>
        <dbReference type="EC" id="2.7.13.3"/>
    </reaction>
</comment>
<comment type="subcellular location">
    <subcellularLocation>
        <location evidence="1">Cell inner membrane</location>
        <topology evidence="1">Multi-pass membrane protein</topology>
    </subcellularLocation>
</comment>
<comment type="induction">
    <text>By the AI-2 quorum sensing system.</text>
</comment>
<reference key="1">
    <citation type="journal article" date="2001" name="Nature">
        <title>Genome sequence of enterohaemorrhagic Escherichia coli O157:H7.</title>
        <authorList>
            <person name="Perna N.T."/>
            <person name="Plunkett G. III"/>
            <person name="Burland V."/>
            <person name="Mau B."/>
            <person name="Glasner J.D."/>
            <person name="Rose D.J."/>
            <person name="Mayhew G.F."/>
            <person name="Evans P.S."/>
            <person name="Gregor J."/>
            <person name="Kirkpatrick H.A."/>
            <person name="Posfai G."/>
            <person name="Hackett J."/>
            <person name="Klink S."/>
            <person name="Boutin A."/>
            <person name="Shao Y."/>
            <person name="Miller L."/>
            <person name="Grotbeck E.J."/>
            <person name="Davis N.W."/>
            <person name="Lim A."/>
            <person name="Dimalanta E.T."/>
            <person name="Potamousis K."/>
            <person name="Apodaca J."/>
            <person name="Anantharaman T.S."/>
            <person name="Lin J."/>
            <person name="Yen G."/>
            <person name="Schwartz D.C."/>
            <person name="Welch R.A."/>
            <person name="Blattner F.R."/>
        </authorList>
    </citation>
    <scope>NUCLEOTIDE SEQUENCE [LARGE SCALE GENOMIC DNA]</scope>
    <source>
        <strain>O157:H7 / EDL933 / ATCC 700927 / EHEC</strain>
    </source>
</reference>
<reference key="2">
    <citation type="journal article" date="2001" name="DNA Res.">
        <title>Complete genome sequence of enterohemorrhagic Escherichia coli O157:H7 and genomic comparison with a laboratory strain K-12.</title>
        <authorList>
            <person name="Hayashi T."/>
            <person name="Makino K."/>
            <person name="Ohnishi M."/>
            <person name="Kurokawa K."/>
            <person name="Ishii K."/>
            <person name="Yokoyama K."/>
            <person name="Han C.-G."/>
            <person name="Ohtsubo E."/>
            <person name="Nakayama K."/>
            <person name="Murata T."/>
            <person name="Tanaka M."/>
            <person name="Tobe T."/>
            <person name="Iida T."/>
            <person name="Takami H."/>
            <person name="Honda T."/>
            <person name="Sasakawa C."/>
            <person name="Ogasawara N."/>
            <person name="Yasunaga T."/>
            <person name="Kuhara S."/>
            <person name="Shiba T."/>
            <person name="Hattori M."/>
            <person name="Shinagawa H."/>
        </authorList>
    </citation>
    <scope>NUCLEOTIDE SEQUENCE [LARGE SCALE GENOMIC DNA]</scope>
    <source>
        <strain>O157:H7 / Sakai / RIMD 0509952 / EHEC</strain>
    </source>
</reference>
<reference key="3">
    <citation type="journal article" date="2002" name="Mol. Microbiol.">
        <title>Quorum sensing Escherichia coli regulators B and C (QseBC): a novel two-component regulatory system involved in the regulation of flagella and motility by quorum sensing in E. coli.</title>
        <authorList>
            <person name="Sperandio V."/>
            <person name="Torres A.G."/>
            <person name="Kaper J.B."/>
        </authorList>
    </citation>
    <scope>FUNCTION</scope>
    <source>
        <strain>K12</strain>
        <strain>O157:H7 / EHEC</strain>
    </source>
</reference>
<evidence type="ECO:0000250" key="1"/>
<evidence type="ECO:0000255" key="2"/>
<evidence type="ECO:0000255" key="3">
    <source>
        <dbReference type="PROSITE-ProRule" id="PRU00107"/>
    </source>
</evidence>
<evidence type="ECO:0000269" key="4">
    <source>
    </source>
</evidence>